<organism>
    <name type="scientific">Salmonella choleraesuis (strain SC-B67)</name>
    <dbReference type="NCBI Taxonomy" id="321314"/>
    <lineage>
        <taxon>Bacteria</taxon>
        <taxon>Pseudomonadati</taxon>
        <taxon>Pseudomonadota</taxon>
        <taxon>Gammaproteobacteria</taxon>
        <taxon>Enterobacterales</taxon>
        <taxon>Enterobacteriaceae</taxon>
        <taxon>Salmonella</taxon>
    </lineage>
</organism>
<gene>
    <name evidence="1" type="primary">btuD</name>
    <name type="ordered locus">SCH_1361</name>
</gene>
<accession>Q57PU4</accession>
<sequence>MSQLMQLKDVAESTRLGPLSGEVSAGEILHLVGPNGAGKSTLLARMAGLTSGEGSIRFGGAPLEAWATATLAQHRAYLAQQQNPPFAMPVWHYLTLHQPDKTRTGQLNEVADMLGLGDKLGRSVNQLSGGEWQRVRLAAVVLQIHPDANPVGQLLLLDEPMNSLDVAQQNALDRVLHHLCQAGIAIVMSSHDLNHTLRHAHKAWLLKRGKLIACGRREEVLTPSYLAQAYGLRFRRLDVEGHPMLISAT</sequence>
<comment type="function">
    <text evidence="1">Part of the ABC transporter complex BtuCDF involved in vitamin B12 import. Responsible for energy coupling to the transport system.</text>
</comment>
<comment type="catalytic activity">
    <reaction evidence="1">
        <text>an R-cob(III)alamin(out) + ATP + H2O = an R-cob(III)alamin(in) + ADP + phosphate + H(+)</text>
        <dbReference type="Rhea" id="RHEA:17873"/>
        <dbReference type="ChEBI" id="CHEBI:15377"/>
        <dbReference type="ChEBI" id="CHEBI:15378"/>
        <dbReference type="ChEBI" id="CHEBI:30616"/>
        <dbReference type="ChEBI" id="CHEBI:43474"/>
        <dbReference type="ChEBI" id="CHEBI:140785"/>
        <dbReference type="ChEBI" id="CHEBI:456216"/>
        <dbReference type="EC" id="7.6.2.8"/>
    </reaction>
</comment>
<comment type="subunit">
    <text evidence="1">The complex is composed of two ATP-binding proteins (BtuD), two transmembrane proteins (BtuC) and a solute-binding protein (BtuF).</text>
</comment>
<comment type="subcellular location">
    <subcellularLocation>
        <location evidence="1">Cell inner membrane</location>
        <topology evidence="1">Peripheral membrane protein</topology>
    </subcellularLocation>
</comment>
<comment type="similarity">
    <text evidence="1">Belongs to the ABC transporter superfamily. Vitamin B12 importer (TC 3.A.1.13.1) family.</text>
</comment>
<protein>
    <recommendedName>
        <fullName evidence="1">Vitamin B12 import ATP-binding protein BtuD</fullName>
        <ecNumber evidence="1">7.6.2.8</ecNumber>
    </recommendedName>
    <alternativeName>
        <fullName evidence="1">Vitamin B12-transporting ATPase</fullName>
    </alternativeName>
</protein>
<evidence type="ECO:0000255" key="1">
    <source>
        <dbReference type="HAMAP-Rule" id="MF_01005"/>
    </source>
</evidence>
<dbReference type="EC" id="7.6.2.8" evidence="1"/>
<dbReference type="EMBL" id="AE017220">
    <property type="protein sequence ID" value="AAX65267.1"/>
    <property type="molecule type" value="Genomic_DNA"/>
</dbReference>
<dbReference type="RefSeq" id="WP_000080607.1">
    <property type="nucleotide sequence ID" value="NC_006905.1"/>
</dbReference>
<dbReference type="SMR" id="Q57PU4"/>
<dbReference type="KEGG" id="sec:SCH_1361"/>
<dbReference type="HOGENOM" id="CLU_000604_1_11_6"/>
<dbReference type="Proteomes" id="UP000000538">
    <property type="component" value="Chromosome"/>
</dbReference>
<dbReference type="GO" id="GO:0005886">
    <property type="term" value="C:plasma membrane"/>
    <property type="evidence" value="ECO:0007669"/>
    <property type="project" value="UniProtKB-SubCell"/>
</dbReference>
<dbReference type="GO" id="GO:0015420">
    <property type="term" value="F:ABC-type vitamin B12 transporter activity"/>
    <property type="evidence" value="ECO:0007669"/>
    <property type="project" value="UniProtKB-UniRule"/>
</dbReference>
<dbReference type="GO" id="GO:0005524">
    <property type="term" value="F:ATP binding"/>
    <property type="evidence" value="ECO:0007669"/>
    <property type="project" value="UniProtKB-KW"/>
</dbReference>
<dbReference type="GO" id="GO:0016887">
    <property type="term" value="F:ATP hydrolysis activity"/>
    <property type="evidence" value="ECO:0007669"/>
    <property type="project" value="InterPro"/>
</dbReference>
<dbReference type="CDD" id="cd03214">
    <property type="entry name" value="ABC_Iron-Siderophores_B12_Hemin"/>
    <property type="match status" value="1"/>
</dbReference>
<dbReference type="FunFam" id="3.40.50.300:FF:000462">
    <property type="entry name" value="Vitamin B12 import ATP-binding protein BtuD"/>
    <property type="match status" value="1"/>
</dbReference>
<dbReference type="Gene3D" id="3.40.50.300">
    <property type="entry name" value="P-loop containing nucleotide triphosphate hydrolases"/>
    <property type="match status" value="1"/>
</dbReference>
<dbReference type="HAMAP" id="MF_01005">
    <property type="entry name" value="BtuD"/>
    <property type="match status" value="1"/>
</dbReference>
<dbReference type="InterPro" id="IPR003593">
    <property type="entry name" value="AAA+_ATPase"/>
</dbReference>
<dbReference type="InterPro" id="IPR003439">
    <property type="entry name" value="ABC_transporter-like_ATP-bd"/>
</dbReference>
<dbReference type="InterPro" id="IPR017871">
    <property type="entry name" value="ABC_transporter-like_CS"/>
</dbReference>
<dbReference type="InterPro" id="IPR023693">
    <property type="entry name" value="ABC_transptr_BtuD"/>
</dbReference>
<dbReference type="InterPro" id="IPR050153">
    <property type="entry name" value="Metal_Ion_Import_ABC"/>
</dbReference>
<dbReference type="InterPro" id="IPR027417">
    <property type="entry name" value="P-loop_NTPase"/>
</dbReference>
<dbReference type="NCBIfam" id="NF002981">
    <property type="entry name" value="PRK03695.1"/>
    <property type="match status" value="1"/>
</dbReference>
<dbReference type="PANTHER" id="PTHR42734">
    <property type="entry name" value="METAL TRANSPORT SYSTEM ATP-BINDING PROTEIN TM_0124-RELATED"/>
    <property type="match status" value="1"/>
</dbReference>
<dbReference type="PANTHER" id="PTHR42734:SF18">
    <property type="entry name" value="VITAMIN B12 IMPORT ATP-BINDING PROTEIN BTUD"/>
    <property type="match status" value="1"/>
</dbReference>
<dbReference type="Pfam" id="PF00005">
    <property type="entry name" value="ABC_tran"/>
    <property type="match status" value="1"/>
</dbReference>
<dbReference type="SMART" id="SM00382">
    <property type="entry name" value="AAA"/>
    <property type="match status" value="1"/>
</dbReference>
<dbReference type="SUPFAM" id="SSF52540">
    <property type="entry name" value="P-loop containing nucleoside triphosphate hydrolases"/>
    <property type="match status" value="1"/>
</dbReference>
<dbReference type="PROSITE" id="PS00211">
    <property type="entry name" value="ABC_TRANSPORTER_1"/>
    <property type="match status" value="1"/>
</dbReference>
<dbReference type="PROSITE" id="PS50893">
    <property type="entry name" value="ABC_TRANSPORTER_2"/>
    <property type="match status" value="1"/>
</dbReference>
<reference key="1">
    <citation type="journal article" date="2005" name="Nucleic Acids Res.">
        <title>The genome sequence of Salmonella enterica serovar Choleraesuis, a highly invasive and resistant zoonotic pathogen.</title>
        <authorList>
            <person name="Chiu C.-H."/>
            <person name="Tang P."/>
            <person name="Chu C."/>
            <person name="Hu S."/>
            <person name="Bao Q."/>
            <person name="Yu J."/>
            <person name="Chou Y.-Y."/>
            <person name="Wang H.-S."/>
            <person name="Lee Y.-S."/>
        </authorList>
    </citation>
    <scope>NUCLEOTIDE SEQUENCE [LARGE SCALE GENOMIC DNA]</scope>
    <source>
        <strain>SC-B67</strain>
    </source>
</reference>
<name>BTUD_SALCH</name>
<proteinExistence type="inferred from homology"/>
<feature type="chain" id="PRO_0000091956" description="Vitamin B12 import ATP-binding protein BtuD">
    <location>
        <begin position="1"/>
        <end position="249"/>
    </location>
</feature>
<feature type="domain" description="ABC transporter" evidence="1">
    <location>
        <begin position="1"/>
        <end position="233"/>
    </location>
</feature>
<feature type="binding site" evidence="1">
    <location>
        <begin position="33"/>
        <end position="40"/>
    </location>
    <ligand>
        <name>ATP</name>
        <dbReference type="ChEBI" id="CHEBI:30616"/>
    </ligand>
</feature>
<keyword id="KW-0067">ATP-binding</keyword>
<keyword id="KW-0997">Cell inner membrane</keyword>
<keyword id="KW-1003">Cell membrane</keyword>
<keyword id="KW-0472">Membrane</keyword>
<keyword id="KW-0547">Nucleotide-binding</keyword>
<keyword id="KW-1278">Translocase</keyword>
<keyword id="KW-0813">Transport</keyword>